<name>STE20_KLULA</name>
<accession>Q6CVA2</accession>
<gene>
    <name type="primary">STE20</name>
    <name type="ordered locus">KLLA0B13607g</name>
</gene>
<organism>
    <name type="scientific">Kluyveromyces lactis (strain ATCC 8585 / CBS 2359 / DSM 70799 / NBRC 1267 / NRRL Y-1140 / WM37)</name>
    <name type="common">Yeast</name>
    <name type="synonym">Candida sphaerica</name>
    <dbReference type="NCBI Taxonomy" id="284590"/>
    <lineage>
        <taxon>Eukaryota</taxon>
        <taxon>Fungi</taxon>
        <taxon>Dikarya</taxon>
        <taxon>Ascomycota</taxon>
        <taxon>Saccharomycotina</taxon>
        <taxon>Saccharomycetes</taxon>
        <taxon>Saccharomycetales</taxon>
        <taxon>Saccharomycetaceae</taxon>
        <taxon>Kluyveromyces</taxon>
    </lineage>
</organism>
<evidence type="ECO:0000250" key="1"/>
<evidence type="ECO:0000255" key="2">
    <source>
        <dbReference type="PROSITE-ProRule" id="PRU00057"/>
    </source>
</evidence>
<evidence type="ECO:0000255" key="3">
    <source>
        <dbReference type="PROSITE-ProRule" id="PRU00159"/>
    </source>
</evidence>
<evidence type="ECO:0000255" key="4">
    <source>
        <dbReference type="PROSITE-ProRule" id="PRU10027"/>
    </source>
</evidence>
<evidence type="ECO:0000256" key="5">
    <source>
        <dbReference type="SAM" id="MobiDB-lite"/>
    </source>
</evidence>
<evidence type="ECO:0000305" key="6"/>
<comment type="function">
    <text evidence="1">MAP4K component of the MAPK pathway required for the mating pheromone response and the regulation of cell polarity and cell cycle. Phosphorylates histone H2B to form H2BS10ph (By similarity).</text>
</comment>
<comment type="catalytic activity">
    <reaction>
        <text>L-seryl-[protein] + ATP = O-phospho-L-seryl-[protein] + ADP + H(+)</text>
        <dbReference type="Rhea" id="RHEA:17989"/>
        <dbReference type="Rhea" id="RHEA-COMP:9863"/>
        <dbReference type="Rhea" id="RHEA-COMP:11604"/>
        <dbReference type="ChEBI" id="CHEBI:15378"/>
        <dbReference type="ChEBI" id="CHEBI:29999"/>
        <dbReference type="ChEBI" id="CHEBI:30616"/>
        <dbReference type="ChEBI" id="CHEBI:83421"/>
        <dbReference type="ChEBI" id="CHEBI:456216"/>
        <dbReference type="EC" id="2.7.11.1"/>
    </reaction>
</comment>
<comment type="catalytic activity">
    <reaction>
        <text>L-threonyl-[protein] + ATP = O-phospho-L-threonyl-[protein] + ADP + H(+)</text>
        <dbReference type="Rhea" id="RHEA:46608"/>
        <dbReference type="Rhea" id="RHEA-COMP:11060"/>
        <dbReference type="Rhea" id="RHEA-COMP:11605"/>
        <dbReference type="ChEBI" id="CHEBI:15378"/>
        <dbReference type="ChEBI" id="CHEBI:30013"/>
        <dbReference type="ChEBI" id="CHEBI:30616"/>
        <dbReference type="ChEBI" id="CHEBI:61977"/>
        <dbReference type="ChEBI" id="CHEBI:456216"/>
        <dbReference type="EC" id="2.7.11.1"/>
    </reaction>
</comment>
<comment type="subcellular location">
    <subcellularLocation>
        <location evidence="1">Cytoplasm</location>
    </subcellularLocation>
    <subcellularLocation>
        <location evidence="1">Nucleus</location>
    </subcellularLocation>
</comment>
<comment type="similarity">
    <text evidence="6">Belongs to the protein kinase superfamily. STE Ser/Thr protein kinase family. STE20 subfamily.</text>
</comment>
<dbReference type="EC" id="2.7.11.1"/>
<dbReference type="EMBL" id="CR382122">
    <property type="protein sequence ID" value="CAH02530.1"/>
    <property type="molecule type" value="Genomic_DNA"/>
</dbReference>
<dbReference type="RefSeq" id="XP_452137.1">
    <property type="nucleotide sequence ID" value="XM_452137.1"/>
</dbReference>
<dbReference type="SMR" id="Q6CVA2"/>
<dbReference type="FunCoup" id="Q6CVA2">
    <property type="interactions" value="478"/>
</dbReference>
<dbReference type="STRING" id="284590.Q6CVA2"/>
<dbReference type="PaxDb" id="284590-Q6CVA2"/>
<dbReference type="KEGG" id="kla:KLLA0_B13607g"/>
<dbReference type="eggNOG" id="KOG0578">
    <property type="taxonomic scope" value="Eukaryota"/>
</dbReference>
<dbReference type="HOGENOM" id="CLU_000288_26_3_1"/>
<dbReference type="InParanoid" id="Q6CVA2"/>
<dbReference type="OMA" id="MECGDAD"/>
<dbReference type="Proteomes" id="UP000000598">
    <property type="component" value="Chromosome B"/>
</dbReference>
<dbReference type="GO" id="GO:0005737">
    <property type="term" value="C:cytoplasm"/>
    <property type="evidence" value="ECO:0007669"/>
    <property type="project" value="UniProtKB-SubCell"/>
</dbReference>
<dbReference type="GO" id="GO:0005634">
    <property type="term" value="C:nucleus"/>
    <property type="evidence" value="ECO:0007669"/>
    <property type="project" value="UniProtKB-SubCell"/>
</dbReference>
<dbReference type="GO" id="GO:0005524">
    <property type="term" value="F:ATP binding"/>
    <property type="evidence" value="ECO:0007669"/>
    <property type="project" value="UniProtKB-KW"/>
</dbReference>
<dbReference type="GO" id="GO:0106310">
    <property type="term" value="F:protein serine kinase activity"/>
    <property type="evidence" value="ECO:0007669"/>
    <property type="project" value="RHEA"/>
</dbReference>
<dbReference type="GO" id="GO:0004674">
    <property type="term" value="F:protein serine/threonine kinase activity"/>
    <property type="evidence" value="ECO:0007669"/>
    <property type="project" value="UniProtKB-KW"/>
</dbReference>
<dbReference type="GO" id="GO:0019236">
    <property type="term" value="P:response to pheromone"/>
    <property type="evidence" value="ECO:0007669"/>
    <property type="project" value="UniProtKB-KW"/>
</dbReference>
<dbReference type="CDD" id="cd01093">
    <property type="entry name" value="CRIB_PAK_like"/>
    <property type="match status" value="1"/>
</dbReference>
<dbReference type="CDD" id="cd06614">
    <property type="entry name" value="STKc_PAK"/>
    <property type="match status" value="1"/>
</dbReference>
<dbReference type="FunFam" id="1.10.510.10:FF:000011">
    <property type="entry name" value="Non-specific serine/threonine protein kinase"/>
    <property type="match status" value="1"/>
</dbReference>
<dbReference type="FunFam" id="3.30.200.20:FF:000385">
    <property type="entry name" value="Non-specific serine/threonine protein kinase"/>
    <property type="match status" value="1"/>
</dbReference>
<dbReference type="FunFam" id="3.90.810.10:FF:000007">
    <property type="entry name" value="Non-specific serine/threonine protein kinase"/>
    <property type="match status" value="1"/>
</dbReference>
<dbReference type="Gene3D" id="3.90.810.10">
    <property type="entry name" value="CRIB domain"/>
    <property type="match status" value="1"/>
</dbReference>
<dbReference type="Gene3D" id="3.30.200.20">
    <property type="entry name" value="Phosphorylase Kinase, domain 1"/>
    <property type="match status" value="1"/>
</dbReference>
<dbReference type="Gene3D" id="1.10.510.10">
    <property type="entry name" value="Transferase(Phosphotransferase) domain 1"/>
    <property type="match status" value="1"/>
</dbReference>
<dbReference type="InterPro" id="IPR000095">
    <property type="entry name" value="CRIB_dom"/>
</dbReference>
<dbReference type="InterPro" id="IPR036936">
    <property type="entry name" value="CRIB_dom_sf"/>
</dbReference>
<dbReference type="InterPro" id="IPR011009">
    <property type="entry name" value="Kinase-like_dom_sf"/>
</dbReference>
<dbReference type="InterPro" id="IPR051931">
    <property type="entry name" value="PAK3-like"/>
</dbReference>
<dbReference type="InterPro" id="IPR033923">
    <property type="entry name" value="PAK_BD"/>
</dbReference>
<dbReference type="InterPro" id="IPR000719">
    <property type="entry name" value="Prot_kinase_dom"/>
</dbReference>
<dbReference type="InterPro" id="IPR017441">
    <property type="entry name" value="Protein_kinase_ATP_BS"/>
</dbReference>
<dbReference type="InterPro" id="IPR008271">
    <property type="entry name" value="Ser/Thr_kinase_AS"/>
</dbReference>
<dbReference type="PANTHER" id="PTHR45832">
    <property type="entry name" value="SERINE/THREONINE-PROTEIN KINASE SAMKA-RELATED-RELATED"/>
    <property type="match status" value="1"/>
</dbReference>
<dbReference type="PANTHER" id="PTHR45832:SF22">
    <property type="entry name" value="SERINE_THREONINE-PROTEIN KINASE SAMKA-RELATED"/>
    <property type="match status" value="1"/>
</dbReference>
<dbReference type="Pfam" id="PF00786">
    <property type="entry name" value="PBD"/>
    <property type="match status" value="1"/>
</dbReference>
<dbReference type="Pfam" id="PF00069">
    <property type="entry name" value="Pkinase"/>
    <property type="match status" value="1"/>
</dbReference>
<dbReference type="SMART" id="SM00285">
    <property type="entry name" value="PBD"/>
    <property type="match status" value="1"/>
</dbReference>
<dbReference type="SMART" id="SM00220">
    <property type="entry name" value="S_TKc"/>
    <property type="match status" value="1"/>
</dbReference>
<dbReference type="SUPFAM" id="SSF56112">
    <property type="entry name" value="Protein kinase-like (PK-like)"/>
    <property type="match status" value="1"/>
</dbReference>
<dbReference type="PROSITE" id="PS50108">
    <property type="entry name" value="CRIB"/>
    <property type="match status" value="1"/>
</dbReference>
<dbReference type="PROSITE" id="PS00107">
    <property type="entry name" value="PROTEIN_KINASE_ATP"/>
    <property type="match status" value="1"/>
</dbReference>
<dbReference type="PROSITE" id="PS50011">
    <property type="entry name" value="PROTEIN_KINASE_DOM"/>
    <property type="match status" value="1"/>
</dbReference>
<dbReference type="PROSITE" id="PS00108">
    <property type="entry name" value="PROTEIN_KINASE_ST"/>
    <property type="match status" value="1"/>
</dbReference>
<sequence length="989" mass="108623">MTDTGYTEELLPGTFDALSVRENGGNTESDTSSIRKSQNQDSKQEDVHRENLSVQTLEDHTEVTETREQSVSKDLFDLPRAPASLDVKGLQESDEDHYVKDLSDYKSMDPGKPGTVPTNVSEIFNSNQPTLDEPIQFTRVSSSSVLSESISEGDADLISHLEGKVEEGNNLTSKETPGTIESIVGDKTMSTIEGSSQNIGRISTGGRMTPDLSLMGGALETSSDFLNSTQTSNSPKITTPITEVDANDVYESPLNEILSSTDSFNKASTASADHSKHVSVHEVIPEEEPHPETTNEDPPIKTPVMVNNFFENQTPVSESRSPFRTISSPFSSLRKNVKSQHGTPDHSQRNSNSSTSSNDVKRKTGTKKKGVFSTFVQNIKRNSHSEKRISSGSGNGSGNNAFKISTPYNAKHVYHVGVDSKTGEYTGLPNEWEKLLTSSGISMKEQQQHPQAVMDIVKFYQDVTENSGEEKVFKTFKVGGGSGANIASTPSFRTPSTASVQKFETPQMQTDATFPNENNDTPYSSNLQGPLLTNDFSETVNNEKFIPTRPAPKPQGSSTVSRRVEIPSPINSLGHGTPKVQRSDTQSSSIFSFKKMPTLKSEQPLPPIPKAAEKPANLLPARAAPTPPKPAIPTTPEQSSIPAIPSGLAVEVKEESNTSNVQTRKAQEKKREERKRKNQQIQSKLTEICTTGDPSKLYKNLIKIGQGASGGVYTAYELGTNASVAIKQMNLEKQPKKELIVNEILVMKGSKHNNIVNFIDSYLFRGDLWVVMEYMEGGSLTDVVTHCILTEGQIGAVSRETLKGLQFLHSKGVIHRDIKSDNILLSMNGDIKLTDFGFCAQINEVNLKRTTMVGTPYWMAPEVVSRKEYGPKVDIWSLGIMIIEMIEGEPPYLNETPLRALYLIATNGTPKLKDPGNLSHKMAMFLNWCLMVDPEDRGTAADLLEDPFITEIAEENTSLAPLVKLARMKKLAESMEDDENDEDKYDEQS</sequence>
<reference key="1">
    <citation type="journal article" date="2004" name="Nature">
        <title>Genome evolution in yeasts.</title>
        <authorList>
            <person name="Dujon B."/>
            <person name="Sherman D."/>
            <person name="Fischer G."/>
            <person name="Durrens P."/>
            <person name="Casaregola S."/>
            <person name="Lafontaine I."/>
            <person name="de Montigny J."/>
            <person name="Marck C."/>
            <person name="Neuveglise C."/>
            <person name="Talla E."/>
            <person name="Goffard N."/>
            <person name="Frangeul L."/>
            <person name="Aigle M."/>
            <person name="Anthouard V."/>
            <person name="Babour A."/>
            <person name="Barbe V."/>
            <person name="Barnay S."/>
            <person name="Blanchin S."/>
            <person name="Beckerich J.-M."/>
            <person name="Beyne E."/>
            <person name="Bleykasten C."/>
            <person name="Boisrame A."/>
            <person name="Boyer J."/>
            <person name="Cattolico L."/>
            <person name="Confanioleri F."/>
            <person name="de Daruvar A."/>
            <person name="Despons L."/>
            <person name="Fabre E."/>
            <person name="Fairhead C."/>
            <person name="Ferry-Dumazet H."/>
            <person name="Groppi A."/>
            <person name="Hantraye F."/>
            <person name="Hennequin C."/>
            <person name="Jauniaux N."/>
            <person name="Joyet P."/>
            <person name="Kachouri R."/>
            <person name="Kerrest A."/>
            <person name="Koszul R."/>
            <person name="Lemaire M."/>
            <person name="Lesur I."/>
            <person name="Ma L."/>
            <person name="Muller H."/>
            <person name="Nicaud J.-M."/>
            <person name="Nikolski M."/>
            <person name="Oztas S."/>
            <person name="Ozier-Kalogeropoulos O."/>
            <person name="Pellenz S."/>
            <person name="Potier S."/>
            <person name="Richard G.-F."/>
            <person name="Straub M.-L."/>
            <person name="Suleau A."/>
            <person name="Swennen D."/>
            <person name="Tekaia F."/>
            <person name="Wesolowski-Louvel M."/>
            <person name="Westhof E."/>
            <person name="Wirth B."/>
            <person name="Zeniou-Meyer M."/>
            <person name="Zivanovic Y."/>
            <person name="Bolotin-Fukuhara M."/>
            <person name="Thierry A."/>
            <person name="Bouchier C."/>
            <person name="Caudron B."/>
            <person name="Scarpelli C."/>
            <person name="Gaillardin C."/>
            <person name="Weissenbach J."/>
            <person name="Wincker P."/>
            <person name="Souciet J.-L."/>
        </authorList>
    </citation>
    <scope>NUCLEOTIDE SEQUENCE [LARGE SCALE GENOMIC DNA]</scope>
    <source>
        <strain>ATCC 8585 / CBS 2359 / DSM 70799 / NBRC 1267 / NRRL Y-1140 / WM37</strain>
    </source>
</reference>
<proteinExistence type="inferred from homology"/>
<feature type="chain" id="PRO_0000237631" description="Serine/threonine-protein kinase STE20">
    <location>
        <begin position="1"/>
        <end position="989"/>
    </location>
</feature>
<feature type="domain" description="CRIB" evidence="2">
    <location>
        <begin position="404"/>
        <end position="417"/>
    </location>
</feature>
<feature type="domain" description="Protein kinase" evidence="3">
    <location>
        <begin position="698"/>
        <end position="949"/>
    </location>
</feature>
<feature type="region of interest" description="Disordered" evidence="5">
    <location>
        <begin position="1"/>
        <end position="78"/>
    </location>
</feature>
<feature type="region of interest" description="Disordered" evidence="5">
    <location>
        <begin position="265"/>
        <end position="400"/>
    </location>
</feature>
<feature type="region of interest" description="Disordered" evidence="5">
    <location>
        <begin position="567"/>
        <end position="588"/>
    </location>
</feature>
<feature type="region of interest" description="Disordered" evidence="5">
    <location>
        <begin position="620"/>
        <end position="681"/>
    </location>
</feature>
<feature type="compositionally biased region" description="Polar residues" evidence="5">
    <location>
        <begin position="24"/>
        <end position="41"/>
    </location>
</feature>
<feature type="compositionally biased region" description="Basic and acidic residues" evidence="5">
    <location>
        <begin position="42"/>
        <end position="77"/>
    </location>
</feature>
<feature type="compositionally biased region" description="Basic and acidic residues" evidence="5">
    <location>
        <begin position="273"/>
        <end position="293"/>
    </location>
</feature>
<feature type="compositionally biased region" description="Polar residues" evidence="5">
    <location>
        <begin position="309"/>
        <end position="342"/>
    </location>
</feature>
<feature type="active site" description="Proton acceptor" evidence="3 4">
    <location>
        <position position="817"/>
    </location>
</feature>
<feature type="binding site" evidence="3">
    <location>
        <begin position="704"/>
        <end position="712"/>
    </location>
    <ligand>
        <name>ATP</name>
        <dbReference type="ChEBI" id="CHEBI:30616"/>
    </ligand>
</feature>
<feature type="binding site" evidence="3">
    <location>
        <position position="727"/>
    </location>
    <ligand>
        <name>ATP</name>
        <dbReference type="ChEBI" id="CHEBI:30616"/>
    </ligand>
</feature>
<protein>
    <recommendedName>
        <fullName>Serine/threonine-protein kinase STE20</fullName>
        <ecNumber>2.7.11.1</ecNumber>
    </recommendedName>
</protein>
<keyword id="KW-0067">ATP-binding</keyword>
<keyword id="KW-0963">Cytoplasm</keyword>
<keyword id="KW-0418">Kinase</keyword>
<keyword id="KW-0547">Nucleotide-binding</keyword>
<keyword id="KW-0539">Nucleus</keyword>
<keyword id="KW-0589">Pheromone response</keyword>
<keyword id="KW-1185">Reference proteome</keyword>
<keyword id="KW-0723">Serine/threonine-protein kinase</keyword>
<keyword id="KW-0808">Transferase</keyword>